<keyword id="KW-0488">Methylation</keyword>
<keyword id="KW-0687">Ribonucleoprotein</keyword>
<keyword id="KW-0689">Ribosomal protein</keyword>
<keyword id="KW-0694">RNA-binding</keyword>
<keyword id="KW-0699">rRNA-binding</keyword>
<keyword id="KW-0820">tRNA-binding</keyword>
<organism>
    <name type="scientific">Synechococcus sp. (strain CC9605)</name>
    <dbReference type="NCBI Taxonomy" id="110662"/>
    <lineage>
        <taxon>Bacteria</taxon>
        <taxon>Bacillati</taxon>
        <taxon>Cyanobacteriota</taxon>
        <taxon>Cyanophyceae</taxon>
        <taxon>Synechococcales</taxon>
        <taxon>Synechococcaceae</taxon>
        <taxon>Synechococcus</taxon>
    </lineage>
</organism>
<proteinExistence type="inferred from homology"/>
<protein>
    <recommendedName>
        <fullName evidence="2">Small ribosomal subunit protein uS12</fullName>
    </recommendedName>
    <alternativeName>
        <fullName evidence="4">30S ribosomal protein S12</fullName>
    </alternativeName>
</protein>
<feature type="chain" id="PRO_0000238146" description="Small ribosomal subunit protein uS12">
    <location>
        <begin position="1"/>
        <end position="124"/>
    </location>
</feature>
<feature type="region of interest" description="Disordered" evidence="3">
    <location>
        <begin position="104"/>
        <end position="124"/>
    </location>
</feature>
<feature type="modified residue" description="3-methylthioaspartic acid" evidence="1">
    <location>
        <position position="89"/>
    </location>
</feature>
<comment type="function">
    <text evidence="2">With S4 and S5 plays an important role in translational accuracy.</text>
</comment>
<comment type="function">
    <text evidence="2">Interacts with and stabilizes bases of the 16S rRNA that are involved in tRNA selection in the A site and with the mRNA backbone. Located at the interface of the 30S and 50S subunits, it traverses the body of the 30S subunit contacting proteins on the other side and probably holding the rRNA structure together. The combined cluster of proteins S8, S12 and S17 appears to hold together the shoulder and platform of the 30S subunit.</text>
</comment>
<comment type="subunit">
    <text evidence="2">Part of the 30S ribosomal subunit. Contacts proteins S8 and S17. May interact with IF1 in the 30S initiation complex.</text>
</comment>
<comment type="similarity">
    <text evidence="2">Belongs to the universal ribosomal protein uS12 family.</text>
</comment>
<sequence>MPTIQQLIRTERSRLKAKTKSPALKSCPERRGVCTRVYTSTPKKPNSALRKVARVRLTSGFEVTAYIGGVGHNLQEHSVVLIRGGRVKDLPGVRYHIIRGTLDTAGVKDRRQSRSKYGAKAPKE</sequence>
<reference key="1">
    <citation type="submission" date="2005-07" db="EMBL/GenBank/DDBJ databases">
        <title>Complete sequence of Synechococcus sp. CC9605.</title>
        <authorList>
            <consortium name="US DOE Joint Genome Institute"/>
            <person name="Copeland A."/>
            <person name="Lucas S."/>
            <person name="Lapidus A."/>
            <person name="Barry K."/>
            <person name="Detter J.C."/>
            <person name="Glavina T."/>
            <person name="Hammon N."/>
            <person name="Israni S."/>
            <person name="Pitluck S."/>
            <person name="Schmutz J."/>
            <person name="Martinez M."/>
            <person name="Larimer F."/>
            <person name="Land M."/>
            <person name="Kyrpides N."/>
            <person name="Ivanova N."/>
            <person name="Richardson P."/>
        </authorList>
    </citation>
    <scope>NUCLEOTIDE SEQUENCE [LARGE SCALE GENOMIC DNA]</scope>
    <source>
        <strain>CC9605</strain>
    </source>
</reference>
<name>RS12_SYNSC</name>
<dbReference type="EMBL" id="CP000110">
    <property type="protein sequence ID" value="ABB34099.1"/>
    <property type="molecule type" value="Genomic_DNA"/>
</dbReference>
<dbReference type="RefSeq" id="WP_006850614.1">
    <property type="nucleotide sequence ID" value="NC_007516.1"/>
</dbReference>
<dbReference type="SMR" id="Q3AMT3"/>
<dbReference type="STRING" id="110662.Syncc9605_0323"/>
<dbReference type="KEGG" id="syd:Syncc9605_0323"/>
<dbReference type="eggNOG" id="COG0048">
    <property type="taxonomic scope" value="Bacteria"/>
</dbReference>
<dbReference type="HOGENOM" id="CLU_104295_1_2_3"/>
<dbReference type="OrthoDB" id="9802366at2"/>
<dbReference type="GO" id="GO:0015935">
    <property type="term" value="C:small ribosomal subunit"/>
    <property type="evidence" value="ECO:0007669"/>
    <property type="project" value="InterPro"/>
</dbReference>
<dbReference type="GO" id="GO:0019843">
    <property type="term" value="F:rRNA binding"/>
    <property type="evidence" value="ECO:0007669"/>
    <property type="project" value="UniProtKB-UniRule"/>
</dbReference>
<dbReference type="GO" id="GO:0003735">
    <property type="term" value="F:structural constituent of ribosome"/>
    <property type="evidence" value="ECO:0007669"/>
    <property type="project" value="InterPro"/>
</dbReference>
<dbReference type="GO" id="GO:0000049">
    <property type="term" value="F:tRNA binding"/>
    <property type="evidence" value="ECO:0007669"/>
    <property type="project" value="UniProtKB-UniRule"/>
</dbReference>
<dbReference type="GO" id="GO:0006412">
    <property type="term" value="P:translation"/>
    <property type="evidence" value="ECO:0007669"/>
    <property type="project" value="UniProtKB-UniRule"/>
</dbReference>
<dbReference type="CDD" id="cd03368">
    <property type="entry name" value="Ribosomal_S12"/>
    <property type="match status" value="1"/>
</dbReference>
<dbReference type="FunFam" id="2.40.50.140:FF:000001">
    <property type="entry name" value="30S ribosomal protein S12"/>
    <property type="match status" value="1"/>
</dbReference>
<dbReference type="Gene3D" id="2.40.50.140">
    <property type="entry name" value="Nucleic acid-binding proteins"/>
    <property type="match status" value="1"/>
</dbReference>
<dbReference type="HAMAP" id="MF_00403_B">
    <property type="entry name" value="Ribosomal_uS12_B"/>
    <property type="match status" value="1"/>
</dbReference>
<dbReference type="InterPro" id="IPR012340">
    <property type="entry name" value="NA-bd_OB-fold"/>
</dbReference>
<dbReference type="InterPro" id="IPR006032">
    <property type="entry name" value="Ribosomal_uS12"/>
</dbReference>
<dbReference type="InterPro" id="IPR005679">
    <property type="entry name" value="Ribosomal_uS12_bac"/>
</dbReference>
<dbReference type="NCBIfam" id="TIGR00981">
    <property type="entry name" value="rpsL_bact"/>
    <property type="match status" value="1"/>
</dbReference>
<dbReference type="PANTHER" id="PTHR11652">
    <property type="entry name" value="30S RIBOSOMAL PROTEIN S12 FAMILY MEMBER"/>
    <property type="match status" value="1"/>
</dbReference>
<dbReference type="Pfam" id="PF00164">
    <property type="entry name" value="Ribosom_S12_S23"/>
    <property type="match status" value="1"/>
</dbReference>
<dbReference type="PIRSF" id="PIRSF002133">
    <property type="entry name" value="Ribosomal_S12/S23"/>
    <property type="match status" value="1"/>
</dbReference>
<dbReference type="PRINTS" id="PR01034">
    <property type="entry name" value="RIBOSOMALS12"/>
</dbReference>
<dbReference type="SUPFAM" id="SSF50249">
    <property type="entry name" value="Nucleic acid-binding proteins"/>
    <property type="match status" value="1"/>
</dbReference>
<dbReference type="PROSITE" id="PS00055">
    <property type="entry name" value="RIBOSOMAL_S12"/>
    <property type="match status" value="1"/>
</dbReference>
<evidence type="ECO:0000250" key="1"/>
<evidence type="ECO:0000255" key="2">
    <source>
        <dbReference type="HAMAP-Rule" id="MF_00403"/>
    </source>
</evidence>
<evidence type="ECO:0000256" key="3">
    <source>
        <dbReference type="SAM" id="MobiDB-lite"/>
    </source>
</evidence>
<evidence type="ECO:0000305" key="4"/>
<accession>Q3AMT3</accession>
<gene>
    <name evidence="2" type="primary">rpsL</name>
    <name evidence="2" type="synonym">rps12</name>
    <name type="ordered locus">Syncc9605_0323</name>
</gene>